<comment type="function">
    <text evidence="1">Catalytic component of the GATOR2 complex, a multiprotein complex that acts as an activator of the amino acid-sensing branch of the mTORC1 signaling pathway. The GATOR2 complex indirectly activates mTORC1 through the inhibition of the GATOR1 subcomplex. GATOR2 probably acts as an E3 ubiquitin-protein ligase toward GATOR1. In the presence of abundant amino acids, the GATOR2 complex mediates ubiquitination of the NPRL2 core component of the GATOR1 complex, leading to GATOR1 inactivation. In the absence of amino acids, GATOR2 is inhibited, activating the GATOR1 complex. In addition to its role in regulation of the mTORC1 complex, promotes the acidification of lysosomes and facilitates autophagic flux. Within the GATOR2 complex, WDR24 constitutes the catalytic subunit that mediates 'Lys-6'-linked ubiquitination of NPRL2.</text>
</comment>
<comment type="catalytic activity">
    <reaction evidence="1">
        <text>S-ubiquitinyl-[E2 ubiquitin-conjugating enzyme]-L-cysteine + [acceptor protein]-L-lysine = [E2 ubiquitin-conjugating enzyme]-L-cysteine + N(6)-ubiquitinyl-[acceptor protein]-L-lysine.</text>
        <dbReference type="EC" id="2.3.2.27"/>
    </reaction>
</comment>
<comment type="activity regulation">
    <text evidence="1">The GATOR2 complex is negatively regulated by the upstream amino acid sensors CASTOR1 and SESN2, which sequester the GATOR2 complex in absence of amino acids. In the presence of abundant amino acids, GATOR2 is released from CASTOR1 and SESN2 and activated.</text>
</comment>
<comment type="pathway">
    <text evidence="1">Protein modification; protein ubiquitination.</text>
</comment>
<comment type="subunit">
    <text evidence="1">Component of the GATOR2 subcomplex, composed of MIOS, SEC13, SEH1L, WDR24 and WDR59. The GATOR2 complex interacts with CASTOR1 and CASTOR2; the interaction is negatively regulated by arginine. The GATOR2 complex interacts with SESN1, SESN2 and SESN3; the interaction is negatively regulated by amino acids.</text>
</comment>
<comment type="subcellular location">
    <subcellularLocation>
        <location evidence="1">Lysosome membrane</location>
    </subcellularLocation>
</comment>
<comment type="similarity">
    <text evidence="2">Belongs to the WD repeat WDR24 family.</text>
</comment>
<feature type="chain" id="PRO_0000051379" description="GATOR2 complex protein WDR24">
    <location>
        <begin position="1"/>
        <end position="780"/>
    </location>
</feature>
<feature type="repeat" description="WD 1">
    <location>
        <begin position="67"/>
        <end position="107"/>
    </location>
</feature>
<feature type="repeat" description="WD 2">
    <location>
        <begin position="113"/>
        <end position="153"/>
    </location>
</feature>
<feature type="repeat" description="WD 3">
    <location>
        <begin position="156"/>
        <end position="196"/>
    </location>
</feature>
<feature type="repeat" description="WD 4">
    <location>
        <begin position="200"/>
        <end position="240"/>
    </location>
</feature>
<feature type="repeat" description="WD 5">
    <location>
        <begin position="244"/>
        <end position="286"/>
    </location>
</feature>
<feature type="repeat" description="WD 6">
    <location>
        <begin position="290"/>
        <end position="333"/>
    </location>
</feature>
<feature type="zinc finger region" description="C4-type" evidence="1">
    <location>
        <begin position="708"/>
        <end position="730"/>
    </location>
</feature>
<feature type="zinc finger region" description="RING-type; atypical" evidence="1">
    <location>
        <begin position="731"/>
        <end position="780"/>
    </location>
</feature>
<feature type="binding site" evidence="1">
    <location>
        <position position="709"/>
    </location>
    <ligand>
        <name>Zn(2+)</name>
        <dbReference type="ChEBI" id="CHEBI:29105"/>
        <label>1</label>
    </ligand>
</feature>
<feature type="binding site" evidence="1">
    <location>
        <position position="712"/>
    </location>
    <ligand>
        <name>Zn(2+)</name>
        <dbReference type="ChEBI" id="CHEBI:29105"/>
        <label>1</label>
    </ligand>
</feature>
<feature type="binding site" evidence="1">
    <location>
        <position position="723"/>
    </location>
    <ligand>
        <name>Zn(2+)</name>
        <dbReference type="ChEBI" id="CHEBI:29105"/>
        <label>1</label>
    </ligand>
</feature>
<feature type="binding site" evidence="1">
    <location>
        <position position="726"/>
    </location>
    <ligand>
        <name>Zn(2+)</name>
        <dbReference type="ChEBI" id="CHEBI:29105"/>
        <label>1</label>
    </ligand>
</feature>
<feature type="binding site" evidence="1">
    <location>
        <position position="733"/>
    </location>
    <ligand>
        <name>Zn(2+)</name>
        <dbReference type="ChEBI" id="CHEBI:29105"/>
        <label>2</label>
    </ligand>
</feature>
<feature type="binding site" evidence="1">
    <location>
        <position position="736"/>
    </location>
    <ligand>
        <name>Zn(2+)</name>
        <dbReference type="ChEBI" id="CHEBI:29105"/>
        <label>2</label>
    </ligand>
</feature>
<feature type="binding site" evidence="1">
    <location>
        <position position="747"/>
    </location>
    <ligand>
        <name>Zn(2+)</name>
        <dbReference type="ChEBI" id="CHEBI:29105"/>
        <label>3</label>
    </ligand>
</feature>
<feature type="binding site" evidence="1">
    <location>
        <position position="750"/>
    </location>
    <ligand>
        <name>Zn(2+)</name>
        <dbReference type="ChEBI" id="CHEBI:29105"/>
        <label>3</label>
    </ligand>
</feature>
<feature type="binding site" evidence="1">
    <location>
        <position position="752"/>
    </location>
    <ligand>
        <name>Zn(2+)</name>
        <dbReference type="ChEBI" id="CHEBI:29105"/>
        <label>4</label>
    </ligand>
</feature>
<feature type="binding site" evidence="1">
    <location>
        <position position="755"/>
    </location>
    <ligand>
        <name>Zn(2+)</name>
        <dbReference type="ChEBI" id="CHEBI:29105"/>
        <label>2</label>
    </ligand>
</feature>
<feature type="binding site" evidence="1">
    <location>
        <position position="758"/>
    </location>
    <ligand>
        <name>Zn(2+)</name>
        <dbReference type="ChEBI" id="CHEBI:29105"/>
        <label>2</label>
    </ligand>
</feature>
<feature type="binding site" evidence="1">
    <location>
        <position position="769"/>
    </location>
    <ligand>
        <name>Zn(2+)</name>
        <dbReference type="ChEBI" id="CHEBI:29105"/>
        <label>4</label>
    </ligand>
</feature>
<feature type="binding site" evidence="1">
    <location>
        <position position="773"/>
    </location>
    <ligand>
        <name>Zn(2+)</name>
        <dbReference type="ChEBI" id="CHEBI:29105"/>
        <label>4</label>
    </ligand>
</feature>
<feature type="binding site" evidence="1">
    <location>
        <position position="775"/>
    </location>
    <ligand>
        <name>Zn(2+)</name>
        <dbReference type="ChEBI" id="CHEBI:29105"/>
        <label>3</label>
    </ligand>
</feature>
<feature type="binding site" evidence="1">
    <location>
        <position position="777"/>
    </location>
    <ligand>
        <name>Zn(2+)</name>
        <dbReference type="ChEBI" id="CHEBI:29105"/>
        <label>3</label>
    </ligand>
</feature>
<reference key="1">
    <citation type="submission" date="2003-01" db="EMBL/GenBank/DDBJ databases">
        <authorList>
            <consortium name="NIH - Xenopus Gene Collection (XGC) project"/>
        </authorList>
    </citation>
    <scope>NUCLEOTIDE SEQUENCE [LARGE SCALE MRNA]</scope>
    <source>
        <tissue>Embryo</tissue>
    </source>
</reference>
<evidence type="ECO:0000250" key="1">
    <source>
        <dbReference type="UniProtKB" id="Q96S15"/>
    </source>
</evidence>
<evidence type="ECO:0000305" key="2"/>
<keyword id="KW-0072">Autophagy</keyword>
<keyword id="KW-0458">Lysosome</keyword>
<keyword id="KW-0472">Membrane</keyword>
<keyword id="KW-0479">Metal-binding</keyword>
<keyword id="KW-1185">Reference proteome</keyword>
<keyword id="KW-0677">Repeat</keyword>
<keyword id="KW-0808">Transferase</keyword>
<keyword id="KW-0833">Ubl conjugation pathway</keyword>
<keyword id="KW-0853">WD repeat</keyword>
<keyword id="KW-0862">Zinc</keyword>
<keyword id="KW-0863">Zinc-finger</keyword>
<accession>Q7ZX22</accession>
<name>WDR24_XENLA</name>
<organism>
    <name type="scientific">Xenopus laevis</name>
    <name type="common">African clawed frog</name>
    <dbReference type="NCBI Taxonomy" id="8355"/>
    <lineage>
        <taxon>Eukaryota</taxon>
        <taxon>Metazoa</taxon>
        <taxon>Chordata</taxon>
        <taxon>Craniata</taxon>
        <taxon>Vertebrata</taxon>
        <taxon>Euteleostomi</taxon>
        <taxon>Amphibia</taxon>
        <taxon>Batrachia</taxon>
        <taxon>Anura</taxon>
        <taxon>Pipoidea</taxon>
        <taxon>Pipidae</taxon>
        <taxon>Xenopodinae</taxon>
        <taxon>Xenopus</taxon>
        <taxon>Xenopus</taxon>
    </lineage>
</organism>
<proteinExistence type="evidence at transcript level"/>
<gene>
    <name evidence="1" type="primary">wdr24</name>
</gene>
<sequence length="780" mass="88520">MERMARVTTALTGRTMFCHLDAPANAISVCRDAAQVVVAGRNIFKIYSMEEDHFVEKLNLRVGRKPSLNFSCADVVWHQMDDNLLATAATNGVVVTWNLGKPSRNKQDQLFTEHKRTVNKVCFHPTEVYMLLSGSQDGYMKCFDLRKKDSVSTFSGQSESVRDVQFSIRDYFTFAATFENGNVQLWDIRRPDRCERMFTAHNGPVFCCDWHPEDRGWLATGGRDKMVKVWDMNTNRAKEIYCVQTIASVARVKWRPERKYHIGTCSMMVDHNIYVWDVRRPFIPFATFEEHKDVTTGIIWRHMHDPSFLLSGSKDSTLYQHIFRDARRPIDRANPEGLCYGLFGDLAFAAKESLISSSSSHDSNRKPYDRRHPIFFLRRPDPTEQFENISSGLSVFEAGGGDMGWFVATAERYALAGRPLAELCDHNANVARDLNRWQVAQTWTMLRIIYCSPGTVPPANPNHSLGKSGTSLPLLNSFNLKELPSGIVGESRLEHSKGDSRADSILMDPAAINNDENEETEGSDVPADYLLGDVEGDEDELYMMDQEQPHTEEQEYVLPQEGFPLRHEIMDNPSALDHLQEKADSPHVSGNEAETVSLTPVESFSLISISHALYENRLPSDFFSPTVRDMLCFYAEQGDVQMAASVLIVLGDRIRKEIDEQTQEHWFTSYIDLLQRFKLWNVSNQVIKLSTCSSINCLNQASTTLHVNCSNCKRPMSNKGWICDRCRQCASMCAVCHHVVKGLFVWCQGCCHGGHLQHIMNWMQNNCYCPAGCGHVCEYS</sequence>
<dbReference type="EC" id="2.3.2.27" evidence="1"/>
<dbReference type="EMBL" id="BC046252">
    <property type="protein sequence ID" value="AAH46252.1"/>
    <property type="molecule type" value="mRNA"/>
</dbReference>
<dbReference type="RefSeq" id="NP_001080665.1">
    <property type="nucleotide sequence ID" value="NM_001087196.1"/>
</dbReference>
<dbReference type="RefSeq" id="XP_018096884.1">
    <property type="nucleotide sequence ID" value="XM_018241395.1"/>
</dbReference>
<dbReference type="RefSeq" id="XP_018096885.1">
    <property type="nucleotide sequence ID" value="XM_018241396.1"/>
</dbReference>
<dbReference type="RefSeq" id="XP_018096886.1">
    <property type="nucleotide sequence ID" value="XM_018241397.1"/>
</dbReference>
<dbReference type="SMR" id="Q7ZX22"/>
<dbReference type="DNASU" id="380357"/>
<dbReference type="GeneID" id="380357"/>
<dbReference type="KEGG" id="xla:380357"/>
<dbReference type="AGR" id="Xenbase:XB-GENE-5898590"/>
<dbReference type="CTD" id="380357"/>
<dbReference type="Xenbase" id="XB-GENE-5898590">
    <property type="gene designation" value="wdr24.L"/>
</dbReference>
<dbReference type="OrthoDB" id="60955at2759"/>
<dbReference type="UniPathway" id="UPA00143"/>
<dbReference type="Proteomes" id="UP000186698">
    <property type="component" value="Chromosome 9_10L"/>
</dbReference>
<dbReference type="Bgee" id="380357">
    <property type="expression patterns" value="Expressed in oocyte and 19 other cell types or tissues"/>
</dbReference>
<dbReference type="GO" id="GO:0005829">
    <property type="term" value="C:cytosol"/>
    <property type="evidence" value="ECO:0000318"/>
    <property type="project" value="GO_Central"/>
</dbReference>
<dbReference type="GO" id="GO:0061700">
    <property type="term" value="C:GATOR2 complex"/>
    <property type="evidence" value="ECO:0000250"/>
    <property type="project" value="UniProtKB"/>
</dbReference>
<dbReference type="GO" id="GO:0005765">
    <property type="term" value="C:lysosomal membrane"/>
    <property type="evidence" value="ECO:0000250"/>
    <property type="project" value="UniProtKB"/>
</dbReference>
<dbReference type="GO" id="GO:0005774">
    <property type="term" value="C:vacuolar membrane"/>
    <property type="evidence" value="ECO:0000318"/>
    <property type="project" value="GO_Central"/>
</dbReference>
<dbReference type="GO" id="GO:0061630">
    <property type="term" value="F:ubiquitin protein ligase activity"/>
    <property type="evidence" value="ECO:0000250"/>
    <property type="project" value="UniProtKB"/>
</dbReference>
<dbReference type="GO" id="GO:0008270">
    <property type="term" value="F:zinc ion binding"/>
    <property type="evidence" value="ECO:0007669"/>
    <property type="project" value="UniProtKB-KW"/>
</dbReference>
<dbReference type="GO" id="GO:0006914">
    <property type="term" value="P:autophagy"/>
    <property type="evidence" value="ECO:0007669"/>
    <property type="project" value="UniProtKB-KW"/>
</dbReference>
<dbReference type="GO" id="GO:0034198">
    <property type="term" value="P:cellular response to amino acid starvation"/>
    <property type="evidence" value="ECO:0000318"/>
    <property type="project" value="GO_Central"/>
</dbReference>
<dbReference type="GO" id="GO:0031669">
    <property type="term" value="P:cellular response to nutrient levels"/>
    <property type="evidence" value="ECO:0000250"/>
    <property type="project" value="UniProtKB"/>
</dbReference>
<dbReference type="GO" id="GO:0016239">
    <property type="term" value="P:positive regulation of macroautophagy"/>
    <property type="evidence" value="ECO:0000318"/>
    <property type="project" value="GO_Central"/>
</dbReference>
<dbReference type="GO" id="GO:1904263">
    <property type="term" value="P:positive regulation of TORC1 signaling"/>
    <property type="evidence" value="ECO:0000250"/>
    <property type="project" value="UniProtKB"/>
</dbReference>
<dbReference type="GO" id="GO:0085020">
    <property type="term" value="P:protein K6-linked ubiquitination"/>
    <property type="evidence" value="ECO:0000250"/>
    <property type="project" value="UniProtKB"/>
</dbReference>
<dbReference type="CDD" id="cd16693">
    <property type="entry name" value="mRING-H2-C3H3C2_WDR24"/>
    <property type="match status" value="1"/>
</dbReference>
<dbReference type="FunFam" id="2.130.10.10:FF:000106">
    <property type="entry name" value="WD repeat domain 24"/>
    <property type="match status" value="1"/>
</dbReference>
<dbReference type="Gene3D" id="2.130.10.10">
    <property type="entry name" value="YVTN repeat-like/Quinoprotein amine dehydrogenase"/>
    <property type="match status" value="1"/>
</dbReference>
<dbReference type="InterPro" id="IPR015943">
    <property type="entry name" value="WD40/YVTN_repeat-like_dom_sf"/>
</dbReference>
<dbReference type="InterPro" id="IPR019775">
    <property type="entry name" value="WD40_repeat_CS"/>
</dbReference>
<dbReference type="InterPro" id="IPR036322">
    <property type="entry name" value="WD40_repeat_dom_sf"/>
</dbReference>
<dbReference type="InterPro" id="IPR001680">
    <property type="entry name" value="WD40_rpt"/>
</dbReference>
<dbReference type="InterPro" id="IPR037590">
    <property type="entry name" value="WDR24"/>
</dbReference>
<dbReference type="PANTHER" id="PTHR46200">
    <property type="entry name" value="GATOR COMPLEX PROTEIN WDR24"/>
    <property type="match status" value="1"/>
</dbReference>
<dbReference type="PANTHER" id="PTHR46200:SF1">
    <property type="entry name" value="GATOR COMPLEX PROTEIN WDR24"/>
    <property type="match status" value="1"/>
</dbReference>
<dbReference type="Pfam" id="PF00400">
    <property type="entry name" value="WD40"/>
    <property type="match status" value="3"/>
</dbReference>
<dbReference type="SMART" id="SM00320">
    <property type="entry name" value="WD40"/>
    <property type="match status" value="6"/>
</dbReference>
<dbReference type="SUPFAM" id="SSF50978">
    <property type="entry name" value="WD40 repeat-like"/>
    <property type="match status" value="1"/>
</dbReference>
<dbReference type="PROSITE" id="PS00678">
    <property type="entry name" value="WD_REPEATS_1"/>
    <property type="match status" value="3"/>
</dbReference>
<dbReference type="PROSITE" id="PS50082">
    <property type="entry name" value="WD_REPEATS_2"/>
    <property type="match status" value="2"/>
</dbReference>
<dbReference type="PROSITE" id="PS50294">
    <property type="entry name" value="WD_REPEATS_REGION"/>
    <property type="match status" value="1"/>
</dbReference>
<protein>
    <recommendedName>
        <fullName evidence="2">GATOR2 complex protein WDR24</fullName>
        <ecNumber evidence="1">2.3.2.27</ecNumber>
    </recommendedName>
</protein>